<sequence length="351" mass="39163">MTIAIGQEEGRGWFDLVDDWLKRDRFVFIGWSGLLLFPTSYLSIGGWFTGTTFVTSWYTHGLASSYLEGCNFFTAAVSTPANSMGHSLLLLWGPEAQGDFTRWCQIGGLWAFCALHGAFGLIGFCLRQFEIARLVGIRPYNAIAFSGPIAIFVSVFLMYPLGQASWFFAPSLGVAAIFRFLLFIQGFHNFTLNPFHMMGVAGILGAALLCAIHGATVQNTIFEDGDAANTFRAFTPTQSEETYSMVTANRFWSQVFGVAFSNKRWLHFFMLFVPLAGLWTSAIGIVGLALNLRAYDFVSQELRAAEDPEFETFYTKNLLLNEGIRSWMAAQDQPHENFIFPEEVLPRGNAL</sequence>
<protein>
    <recommendedName>
        <fullName evidence="1">Photosystem II D2 protein</fullName>
        <shortName evidence="1">PSII D2 protein</shortName>
        <ecNumber evidence="1">1.10.3.9</ecNumber>
    </recommendedName>
    <alternativeName>
        <fullName evidence="1">Photosystem Q(A) protein</fullName>
    </alternativeName>
</protein>
<geneLocation type="chloroplast"/>
<accession>O78427</accession>
<comment type="function">
    <text evidence="1">Photosystem II (PSII) is a light-driven water:plastoquinone oxidoreductase that uses light energy to abstract electrons from H(2)O, generating O(2) and a proton gradient subsequently used for ATP formation. It consists of a core antenna complex that captures photons, and an electron transfer chain that converts photonic excitation into a charge separation. The D1/D2 (PsbA/PsbD) reaction center heterodimer binds P680, the primary electron donor of PSII as well as several subsequent electron acceptors. D2 is needed for assembly of a stable PSII complex.</text>
</comment>
<comment type="catalytic activity">
    <reaction evidence="1">
        <text>2 a plastoquinone + 4 hnu + 2 H2O = 2 a plastoquinol + O2</text>
        <dbReference type="Rhea" id="RHEA:36359"/>
        <dbReference type="Rhea" id="RHEA-COMP:9561"/>
        <dbReference type="Rhea" id="RHEA-COMP:9562"/>
        <dbReference type="ChEBI" id="CHEBI:15377"/>
        <dbReference type="ChEBI" id="CHEBI:15379"/>
        <dbReference type="ChEBI" id="CHEBI:17757"/>
        <dbReference type="ChEBI" id="CHEBI:30212"/>
        <dbReference type="ChEBI" id="CHEBI:62192"/>
        <dbReference type="EC" id="1.10.3.9"/>
    </reaction>
</comment>
<comment type="cofactor">
    <text evidence="1">The D1/D2 heterodimer binds P680, chlorophylls that are the primary electron donor of PSII, and subsequent electron acceptors. It shares a non-heme iron and each subunit binds pheophytin, quinone, additional chlorophylls, carotenoids and lipids. There is also a Cl(-1) ion associated with D1 and D2, which is required for oxygen evolution. The PSII complex binds additional chlorophylls, carotenoids and specific lipids.</text>
</comment>
<comment type="subunit">
    <text evidence="1">PSII is composed of 1 copy each of membrane proteins PsbA, PsbB, PsbC, PsbD, PsbE, PsbF, PsbH, PsbI, PsbJ, PsbK, PsbL, PsbM, PsbT, PsbX, PsbY, PsbZ, Psb30/Ycf12, at least 3 peripheral proteins of the oxygen-evolving complex and a large number of cofactors. It forms dimeric complexes.</text>
</comment>
<comment type="subcellular location">
    <subcellularLocation>
        <location evidence="1">Plastid</location>
        <location evidence="1">Chloroplast thylakoid membrane</location>
        <topology evidence="1">Multi-pass membrane protein</topology>
    </subcellularLocation>
</comment>
<comment type="miscellaneous">
    <text evidence="1">2 of the reaction center chlorophylls (ChlD1 and ChlD2) are entirely coordinated by water.</text>
</comment>
<comment type="similarity">
    <text evidence="1">Belongs to the reaction center PufL/M/PsbA/D family.</text>
</comment>
<dbReference type="EC" id="1.10.3.9" evidence="1"/>
<dbReference type="EMBL" id="AF041468">
    <property type="protein sequence ID" value="AAC35612.1"/>
    <property type="molecule type" value="Genomic_DNA"/>
</dbReference>
<dbReference type="RefSeq" id="NP_050678.1">
    <property type="nucleotide sequence ID" value="NC_000926.1"/>
</dbReference>
<dbReference type="SMR" id="O78427"/>
<dbReference type="GeneID" id="856964"/>
<dbReference type="HOGENOM" id="CLU_077965_0_0_1"/>
<dbReference type="OMA" id="RWFQLGG"/>
<dbReference type="GO" id="GO:0009535">
    <property type="term" value="C:chloroplast thylakoid membrane"/>
    <property type="evidence" value="ECO:0007669"/>
    <property type="project" value="UniProtKB-SubCell"/>
</dbReference>
<dbReference type="GO" id="GO:0009523">
    <property type="term" value="C:photosystem II"/>
    <property type="evidence" value="ECO:0007669"/>
    <property type="project" value="UniProtKB-KW"/>
</dbReference>
<dbReference type="GO" id="GO:0016168">
    <property type="term" value="F:chlorophyll binding"/>
    <property type="evidence" value="ECO:0007669"/>
    <property type="project" value="UniProtKB-UniRule"/>
</dbReference>
<dbReference type="GO" id="GO:0045156">
    <property type="term" value="F:electron transporter, transferring electrons within the cyclic electron transport pathway of photosynthesis activity"/>
    <property type="evidence" value="ECO:0007669"/>
    <property type="project" value="InterPro"/>
</dbReference>
<dbReference type="GO" id="GO:0005506">
    <property type="term" value="F:iron ion binding"/>
    <property type="evidence" value="ECO:0007669"/>
    <property type="project" value="UniProtKB-UniRule"/>
</dbReference>
<dbReference type="GO" id="GO:0016491">
    <property type="term" value="F:oxidoreductase activity"/>
    <property type="evidence" value="ECO:0007669"/>
    <property type="project" value="UniProtKB-KW"/>
</dbReference>
<dbReference type="GO" id="GO:0009772">
    <property type="term" value="P:photosynthetic electron transport in photosystem II"/>
    <property type="evidence" value="ECO:0007669"/>
    <property type="project" value="InterPro"/>
</dbReference>
<dbReference type="CDD" id="cd09288">
    <property type="entry name" value="Photosystem-II_D2"/>
    <property type="match status" value="1"/>
</dbReference>
<dbReference type="FunFam" id="1.20.85.10:FF:000001">
    <property type="entry name" value="photosystem II D2 protein-like"/>
    <property type="match status" value="1"/>
</dbReference>
<dbReference type="Gene3D" id="1.20.85.10">
    <property type="entry name" value="Photosystem II protein D1-like"/>
    <property type="match status" value="1"/>
</dbReference>
<dbReference type="HAMAP" id="MF_01383">
    <property type="entry name" value="PSII_PsbD_D2"/>
    <property type="match status" value="1"/>
</dbReference>
<dbReference type="InterPro" id="IPR055266">
    <property type="entry name" value="D1/D2"/>
</dbReference>
<dbReference type="InterPro" id="IPR036854">
    <property type="entry name" value="Photo_II_D1/D2_sf"/>
</dbReference>
<dbReference type="InterPro" id="IPR000484">
    <property type="entry name" value="Photo_RC_L/M"/>
</dbReference>
<dbReference type="InterPro" id="IPR055265">
    <property type="entry name" value="Photo_RC_L/M_CS"/>
</dbReference>
<dbReference type="InterPro" id="IPR005868">
    <property type="entry name" value="PSII_PsbD/D2"/>
</dbReference>
<dbReference type="NCBIfam" id="TIGR01152">
    <property type="entry name" value="psbD"/>
    <property type="match status" value="1"/>
</dbReference>
<dbReference type="PANTHER" id="PTHR33149:SF12">
    <property type="entry name" value="PHOTOSYSTEM II D2 PROTEIN"/>
    <property type="match status" value="1"/>
</dbReference>
<dbReference type="PANTHER" id="PTHR33149">
    <property type="entry name" value="PHOTOSYSTEM II PROTEIN D1"/>
    <property type="match status" value="1"/>
</dbReference>
<dbReference type="Pfam" id="PF00124">
    <property type="entry name" value="Photo_RC"/>
    <property type="match status" value="1"/>
</dbReference>
<dbReference type="PRINTS" id="PR00256">
    <property type="entry name" value="REACTNCENTRE"/>
</dbReference>
<dbReference type="SUPFAM" id="SSF81483">
    <property type="entry name" value="Bacterial photosystem II reaction centre, L and M subunits"/>
    <property type="match status" value="1"/>
</dbReference>
<dbReference type="PROSITE" id="PS00244">
    <property type="entry name" value="REACTION_CENTER"/>
    <property type="match status" value="1"/>
</dbReference>
<reference key="1">
    <citation type="journal article" date="1999" name="J. Mol. Evol.">
        <title>The plastid genome of the cryptophyte alga, Guillardia theta: complete sequence and conserved synteny groups confirm its common ancestry with red algae.</title>
        <authorList>
            <person name="Douglas S.E."/>
            <person name="Penny S.L."/>
        </authorList>
    </citation>
    <scope>NUCLEOTIDE SEQUENCE [LARGE SCALE GENOMIC DNA]</scope>
</reference>
<organism>
    <name type="scientific">Guillardia theta</name>
    <name type="common">Cryptophyte</name>
    <name type="synonym">Cryptomonas phi</name>
    <dbReference type="NCBI Taxonomy" id="55529"/>
    <lineage>
        <taxon>Eukaryota</taxon>
        <taxon>Cryptophyceae</taxon>
        <taxon>Pyrenomonadales</taxon>
        <taxon>Geminigeraceae</taxon>
        <taxon>Guillardia</taxon>
    </lineage>
</organism>
<gene>
    <name evidence="1" type="primary">psbD</name>
</gene>
<name>PSBD_GUITH</name>
<keyword id="KW-0148">Chlorophyll</keyword>
<keyword id="KW-0150">Chloroplast</keyword>
<keyword id="KW-0157">Chromophore</keyword>
<keyword id="KW-0249">Electron transport</keyword>
<keyword id="KW-0408">Iron</keyword>
<keyword id="KW-0460">Magnesium</keyword>
<keyword id="KW-0472">Membrane</keyword>
<keyword id="KW-0479">Metal-binding</keyword>
<keyword id="KW-0560">Oxidoreductase</keyword>
<keyword id="KW-0602">Photosynthesis</keyword>
<keyword id="KW-0604">Photosystem II</keyword>
<keyword id="KW-0934">Plastid</keyword>
<keyword id="KW-0793">Thylakoid</keyword>
<keyword id="KW-0812">Transmembrane</keyword>
<keyword id="KW-1133">Transmembrane helix</keyword>
<keyword id="KW-0813">Transport</keyword>
<feature type="chain" id="PRO_0000090505" description="Photosystem II D2 protein">
    <location>
        <begin position="1"/>
        <end position="351"/>
    </location>
</feature>
<feature type="transmembrane region" description="Helical" evidence="1">
    <location>
        <begin position="39"/>
        <end position="59"/>
    </location>
</feature>
<feature type="transmembrane region" description="Helical" evidence="1">
    <location>
        <begin position="123"/>
        <end position="139"/>
    </location>
</feature>
<feature type="transmembrane region" description="Helical" evidence="1">
    <location>
        <begin position="151"/>
        <end position="164"/>
    </location>
</feature>
<feature type="transmembrane region" description="Helical" evidence="1">
    <location>
        <begin position="206"/>
        <end position="226"/>
    </location>
</feature>
<feature type="transmembrane region" description="Helical" evidence="1">
    <location>
        <begin position="277"/>
        <end position="293"/>
    </location>
</feature>
<feature type="binding site" description="axial binding residue" evidence="1">
    <location>
        <position position="116"/>
    </location>
    <ligand>
        <name>chlorophyll a</name>
        <dbReference type="ChEBI" id="CHEBI:58416"/>
        <label>ChlzD2</label>
    </ligand>
    <ligandPart>
        <name>Mg</name>
        <dbReference type="ChEBI" id="CHEBI:25107"/>
    </ligandPart>
</feature>
<feature type="binding site" evidence="1">
    <location>
        <position position="128"/>
    </location>
    <ligand>
        <name>pheophytin a</name>
        <dbReference type="ChEBI" id="CHEBI:136840"/>
        <label>D2</label>
    </ligand>
</feature>
<feature type="binding site" evidence="1">
    <location>
        <position position="141"/>
    </location>
    <ligand>
        <name>pheophytin a</name>
        <dbReference type="ChEBI" id="CHEBI:136840"/>
        <label>D2</label>
    </ligand>
</feature>
<feature type="binding site" description="axial binding residue" evidence="1">
    <location>
        <position position="196"/>
    </location>
    <ligand>
        <name>chlorophyll a</name>
        <dbReference type="ChEBI" id="CHEBI:58416"/>
        <label>PD2</label>
    </ligand>
    <ligandPart>
        <name>Mg</name>
        <dbReference type="ChEBI" id="CHEBI:25107"/>
    </ligandPart>
</feature>
<feature type="binding site" evidence="1">
    <location>
        <position position="213"/>
    </location>
    <ligand>
        <name>a plastoquinone</name>
        <dbReference type="ChEBI" id="CHEBI:17757"/>
        <label>Q(A)</label>
    </ligand>
</feature>
<feature type="binding site" evidence="1">
    <location>
        <position position="213"/>
    </location>
    <ligand>
        <name>Fe cation</name>
        <dbReference type="ChEBI" id="CHEBI:24875"/>
        <note>ligand shared with heterodimeric partner</note>
    </ligand>
</feature>
<feature type="binding site" evidence="1">
    <location>
        <position position="260"/>
    </location>
    <ligand>
        <name>a plastoquinone</name>
        <dbReference type="ChEBI" id="CHEBI:17757"/>
        <label>Q(A)</label>
    </ligand>
</feature>
<feature type="binding site" evidence="1">
    <location>
        <position position="267"/>
    </location>
    <ligand>
        <name>Fe cation</name>
        <dbReference type="ChEBI" id="CHEBI:24875"/>
        <note>ligand shared with heterodimeric partner</note>
    </ligand>
</feature>
<evidence type="ECO:0000255" key="1">
    <source>
        <dbReference type="HAMAP-Rule" id="MF_01383"/>
    </source>
</evidence>
<proteinExistence type="inferred from homology"/>